<accession>Q9M0G2</accession>
<keyword id="KW-0238">DNA-binding</keyword>
<keyword id="KW-0479">Metal-binding</keyword>
<keyword id="KW-1185">Reference proteome</keyword>
<keyword id="KW-0677">Repeat</keyword>
<keyword id="KW-0862">Zinc</keyword>
<keyword id="KW-0863">Zinc-finger</keyword>
<proteinExistence type="evidence at transcript level"/>
<evidence type="ECO:0000255" key="1">
    <source>
        <dbReference type="PROSITE-ProRule" id="PRU00723"/>
    </source>
</evidence>
<evidence type="ECO:0000256" key="2">
    <source>
        <dbReference type="SAM" id="MobiDB-lite"/>
    </source>
</evidence>
<dbReference type="EMBL" id="AL161574">
    <property type="protein sequence ID" value="CAB79677.1"/>
    <property type="molecule type" value="Genomic_DNA"/>
</dbReference>
<dbReference type="EMBL" id="CP002687">
    <property type="protein sequence ID" value="AEE85600.1"/>
    <property type="molecule type" value="Genomic_DNA"/>
</dbReference>
<dbReference type="EMBL" id="AY045970">
    <property type="protein sequence ID" value="AAK76644.1"/>
    <property type="molecule type" value="mRNA"/>
</dbReference>
<dbReference type="EMBL" id="AY079323">
    <property type="protein sequence ID" value="AAL85054.1"/>
    <property type="molecule type" value="mRNA"/>
</dbReference>
<dbReference type="EMBL" id="AY085636">
    <property type="protein sequence ID" value="AAM62857.1"/>
    <property type="molecule type" value="mRNA"/>
</dbReference>
<dbReference type="PIR" id="T13430">
    <property type="entry name" value="T13430"/>
</dbReference>
<dbReference type="BioGRID" id="14327">
    <property type="interactions" value="7"/>
</dbReference>
<dbReference type="FunCoup" id="Q9M0G2">
    <property type="interactions" value="178"/>
</dbReference>
<dbReference type="IntAct" id="Q9M0G2">
    <property type="interactions" value="3"/>
</dbReference>
<dbReference type="STRING" id="3702.Q9M0G2"/>
<dbReference type="iPTMnet" id="Q9M0G2"/>
<dbReference type="PaxDb" id="3702-AT4G29190.1"/>
<dbReference type="ProteomicsDB" id="239110"/>
<dbReference type="EnsemblPlants" id="AT4G29190.1">
    <property type="protein sequence ID" value="AT4G29190.1"/>
    <property type="gene ID" value="AT4G29190"/>
</dbReference>
<dbReference type="GeneID" id="829040"/>
<dbReference type="Gramene" id="AT4G29190.1">
    <property type="protein sequence ID" value="AT4G29190.1"/>
    <property type="gene ID" value="AT4G29190"/>
</dbReference>
<dbReference type="KEGG" id="ath:AT4G29190"/>
<dbReference type="Araport" id="AT4G29190"/>
<dbReference type="TAIR" id="AT4G29190">
    <property type="gene designation" value="OZF2"/>
</dbReference>
<dbReference type="eggNOG" id="KOG1595">
    <property type="taxonomic scope" value="Eukaryota"/>
</dbReference>
<dbReference type="HOGENOM" id="CLU_044407_0_0_1"/>
<dbReference type="InParanoid" id="Q9M0G2"/>
<dbReference type="OMA" id="DIWENGI"/>
<dbReference type="PhylomeDB" id="Q9M0G2"/>
<dbReference type="PRO" id="PR:Q9M0G2"/>
<dbReference type="Proteomes" id="UP000006548">
    <property type="component" value="Chromosome 4"/>
</dbReference>
<dbReference type="ExpressionAtlas" id="Q9M0G2">
    <property type="expression patterns" value="baseline and differential"/>
</dbReference>
<dbReference type="GO" id="GO:0005886">
    <property type="term" value="C:plasma membrane"/>
    <property type="evidence" value="ECO:0000314"/>
    <property type="project" value="TAIR"/>
</dbReference>
<dbReference type="GO" id="GO:0003677">
    <property type="term" value="F:DNA binding"/>
    <property type="evidence" value="ECO:0007669"/>
    <property type="project" value="UniProtKB-KW"/>
</dbReference>
<dbReference type="GO" id="GO:0003700">
    <property type="term" value="F:DNA-binding transcription factor activity"/>
    <property type="evidence" value="ECO:0000250"/>
    <property type="project" value="TAIR"/>
</dbReference>
<dbReference type="GO" id="GO:0008270">
    <property type="term" value="F:zinc ion binding"/>
    <property type="evidence" value="ECO:0007669"/>
    <property type="project" value="UniProtKB-KW"/>
</dbReference>
<dbReference type="GO" id="GO:0006355">
    <property type="term" value="P:regulation of DNA-templated transcription"/>
    <property type="evidence" value="ECO:0000314"/>
    <property type="project" value="TAIR"/>
</dbReference>
<dbReference type="FunFam" id="3.30.1370.210:FF:000009">
    <property type="entry name" value="Zinc finger CCCH domain-containing protein 66"/>
    <property type="match status" value="1"/>
</dbReference>
<dbReference type="Gene3D" id="3.30.1370.210">
    <property type="match status" value="1"/>
</dbReference>
<dbReference type="InterPro" id="IPR045234">
    <property type="entry name" value="Unkempt-like"/>
</dbReference>
<dbReference type="InterPro" id="IPR000571">
    <property type="entry name" value="Znf_CCCH"/>
</dbReference>
<dbReference type="PANTHER" id="PTHR14493">
    <property type="entry name" value="UNKEMPT FAMILY MEMBER"/>
    <property type="match status" value="1"/>
</dbReference>
<dbReference type="PANTHER" id="PTHR14493:SF149">
    <property type="entry name" value="ZINC FINGER CCCH DOMAIN-CONTAINING PROTEIN 49"/>
    <property type="match status" value="1"/>
</dbReference>
<dbReference type="Pfam" id="PF00642">
    <property type="entry name" value="zf-CCCH"/>
    <property type="match status" value="1"/>
</dbReference>
<dbReference type="Pfam" id="PF25512">
    <property type="entry name" value="zf-CCCH_AtC3H23"/>
    <property type="match status" value="1"/>
</dbReference>
<dbReference type="SMART" id="SM00356">
    <property type="entry name" value="ZnF_C3H1"/>
    <property type="match status" value="2"/>
</dbReference>
<dbReference type="PROSITE" id="PS50103">
    <property type="entry name" value="ZF_C3H1"/>
    <property type="match status" value="1"/>
</dbReference>
<protein>
    <recommendedName>
        <fullName>Zinc finger CCCH domain-containing protein 49</fullName>
        <shortName>AtC3H49</shortName>
    </recommendedName>
</protein>
<gene>
    <name type="ordered locus">At4g29190</name>
    <name type="ORF">F17A13.10</name>
</gene>
<organism>
    <name type="scientific">Arabidopsis thaliana</name>
    <name type="common">Mouse-ear cress</name>
    <dbReference type="NCBI Taxonomy" id="3702"/>
    <lineage>
        <taxon>Eukaryota</taxon>
        <taxon>Viridiplantae</taxon>
        <taxon>Streptophyta</taxon>
        <taxon>Embryophyta</taxon>
        <taxon>Tracheophyta</taxon>
        <taxon>Spermatophyta</taxon>
        <taxon>Magnoliopsida</taxon>
        <taxon>eudicotyledons</taxon>
        <taxon>Gunneridae</taxon>
        <taxon>Pentapetalae</taxon>
        <taxon>rosids</taxon>
        <taxon>malvids</taxon>
        <taxon>Brassicales</taxon>
        <taxon>Brassicaceae</taxon>
        <taxon>Camelineae</taxon>
        <taxon>Arabidopsis</taxon>
    </lineage>
</organism>
<sequence length="356" mass="40264">MMIGETRRTYPTVEIPPWPVLEELTTSEFFSPVMNSPDCSMLEALAGLQRYLPSNEPDPESYPDLLGPDSPIDAYSCDHFRMYDFKVRRCARGRSHDWTECPYAHPGEKARRRDPRKYHYSGTACPDFRKGGCKKGDSCEFAHGVFECWLHPARYRTQPCKDGGNCLRKICFFAHSPDQLRFLHTRSPDRVDSFDVSSPIRARAFQLSISPVSGSPPMSPRADSESSPMTQSLSRSLGSCSINDVVPSFRNLQFNSVKSFPRNNPLFGFGSPRGSILGPGFQSLPTTPTRPGNLDIWEYGLEEEPVMERVVESGRELREKMREKLHKENCMDRVAQDPDQNLGEAPDVGWVSDLLM</sequence>
<name>C3H49_ARATH</name>
<reference key="1">
    <citation type="journal article" date="1999" name="Nature">
        <title>Sequence and analysis of chromosome 4 of the plant Arabidopsis thaliana.</title>
        <authorList>
            <person name="Mayer K.F.X."/>
            <person name="Schueller C."/>
            <person name="Wambutt R."/>
            <person name="Murphy G."/>
            <person name="Volckaert G."/>
            <person name="Pohl T."/>
            <person name="Duesterhoeft A."/>
            <person name="Stiekema W."/>
            <person name="Entian K.-D."/>
            <person name="Terryn N."/>
            <person name="Harris B."/>
            <person name="Ansorge W."/>
            <person name="Brandt P."/>
            <person name="Grivell L.A."/>
            <person name="Rieger M."/>
            <person name="Weichselgartner M."/>
            <person name="de Simone V."/>
            <person name="Obermaier B."/>
            <person name="Mache R."/>
            <person name="Mueller M."/>
            <person name="Kreis M."/>
            <person name="Delseny M."/>
            <person name="Puigdomenech P."/>
            <person name="Watson M."/>
            <person name="Schmidtheini T."/>
            <person name="Reichert B."/>
            <person name="Portetelle D."/>
            <person name="Perez-Alonso M."/>
            <person name="Boutry M."/>
            <person name="Bancroft I."/>
            <person name="Vos P."/>
            <person name="Hoheisel J."/>
            <person name="Zimmermann W."/>
            <person name="Wedler H."/>
            <person name="Ridley P."/>
            <person name="Langham S.-A."/>
            <person name="McCullagh B."/>
            <person name="Bilham L."/>
            <person name="Robben J."/>
            <person name="van der Schueren J."/>
            <person name="Grymonprez B."/>
            <person name="Chuang Y.-J."/>
            <person name="Vandenbussche F."/>
            <person name="Braeken M."/>
            <person name="Weltjens I."/>
            <person name="Voet M."/>
            <person name="Bastiaens I."/>
            <person name="Aert R."/>
            <person name="Defoor E."/>
            <person name="Weitzenegger T."/>
            <person name="Bothe G."/>
            <person name="Ramsperger U."/>
            <person name="Hilbert H."/>
            <person name="Braun M."/>
            <person name="Holzer E."/>
            <person name="Brandt A."/>
            <person name="Peters S."/>
            <person name="van Staveren M."/>
            <person name="Dirkse W."/>
            <person name="Mooijman P."/>
            <person name="Klein Lankhorst R."/>
            <person name="Rose M."/>
            <person name="Hauf J."/>
            <person name="Koetter P."/>
            <person name="Berneiser S."/>
            <person name="Hempel S."/>
            <person name="Feldpausch M."/>
            <person name="Lamberth S."/>
            <person name="Van den Daele H."/>
            <person name="De Keyser A."/>
            <person name="Buysshaert C."/>
            <person name="Gielen J."/>
            <person name="Villarroel R."/>
            <person name="De Clercq R."/>
            <person name="van Montagu M."/>
            <person name="Rogers J."/>
            <person name="Cronin A."/>
            <person name="Quail M.A."/>
            <person name="Bray-Allen S."/>
            <person name="Clark L."/>
            <person name="Doggett J."/>
            <person name="Hall S."/>
            <person name="Kay M."/>
            <person name="Lennard N."/>
            <person name="McLay K."/>
            <person name="Mayes R."/>
            <person name="Pettett A."/>
            <person name="Rajandream M.A."/>
            <person name="Lyne M."/>
            <person name="Benes V."/>
            <person name="Rechmann S."/>
            <person name="Borkova D."/>
            <person name="Bloecker H."/>
            <person name="Scharfe M."/>
            <person name="Grimm M."/>
            <person name="Loehnert T.-H."/>
            <person name="Dose S."/>
            <person name="de Haan M."/>
            <person name="Maarse A.C."/>
            <person name="Schaefer M."/>
            <person name="Mueller-Auer S."/>
            <person name="Gabel C."/>
            <person name="Fuchs M."/>
            <person name="Fartmann B."/>
            <person name="Granderath K."/>
            <person name="Dauner D."/>
            <person name="Herzl A."/>
            <person name="Neumann S."/>
            <person name="Argiriou A."/>
            <person name="Vitale D."/>
            <person name="Liguori R."/>
            <person name="Piravandi E."/>
            <person name="Massenet O."/>
            <person name="Quigley F."/>
            <person name="Clabauld G."/>
            <person name="Muendlein A."/>
            <person name="Felber R."/>
            <person name="Schnabl S."/>
            <person name="Hiller R."/>
            <person name="Schmidt W."/>
            <person name="Lecharny A."/>
            <person name="Aubourg S."/>
            <person name="Chefdor F."/>
            <person name="Cooke R."/>
            <person name="Berger C."/>
            <person name="Monfort A."/>
            <person name="Casacuberta E."/>
            <person name="Gibbons T."/>
            <person name="Weber N."/>
            <person name="Vandenbol M."/>
            <person name="Bargues M."/>
            <person name="Terol J."/>
            <person name="Torres A."/>
            <person name="Perez-Perez A."/>
            <person name="Purnelle B."/>
            <person name="Bent E."/>
            <person name="Johnson S."/>
            <person name="Tacon D."/>
            <person name="Jesse T."/>
            <person name="Heijnen L."/>
            <person name="Schwarz S."/>
            <person name="Scholler P."/>
            <person name="Heber S."/>
            <person name="Francs P."/>
            <person name="Bielke C."/>
            <person name="Frishman D."/>
            <person name="Haase D."/>
            <person name="Lemcke K."/>
            <person name="Mewes H.-W."/>
            <person name="Stocker S."/>
            <person name="Zaccaria P."/>
            <person name="Bevan M."/>
            <person name="Wilson R.K."/>
            <person name="de la Bastide M."/>
            <person name="Habermann K."/>
            <person name="Parnell L."/>
            <person name="Dedhia N."/>
            <person name="Gnoj L."/>
            <person name="Schutz K."/>
            <person name="Huang E."/>
            <person name="Spiegel L."/>
            <person name="Sekhon M."/>
            <person name="Murray J."/>
            <person name="Sheet P."/>
            <person name="Cordes M."/>
            <person name="Abu-Threideh J."/>
            <person name="Stoneking T."/>
            <person name="Kalicki J."/>
            <person name="Graves T."/>
            <person name="Harmon G."/>
            <person name="Edwards J."/>
            <person name="Latreille P."/>
            <person name="Courtney L."/>
            <person name="Cloud J."/>
            <person name="Abbott A."/>
            <person name="Scott K."/>
            <person name="Johnson D."/>
            <person name="Minx P."/>
            <person name="Bentley D."/>
            <person name="Fulton B."/>
            <person name="Miller N."/>
            <person name="Greco T."/>
            <person name="Kemp K."/>
            <person name="Kramer J."/>
            <person name="Fulton L."/>
            <person name="Mardis E."/>
            <person name="Dante M."/>
            <person name="Pepin K."/>
            <person name="Hillier L.W."/>
            <person name="Nelson J."/>
            <person name="Spieth J."/>
            <person name="Ryan E."/>
            <person name="Andrews S."/>
            <person name="Geisel C."/>
            <person name="Layman D."/>
            <person name="Du H."/>
            <person name="Ali J."/>
            <person name="Berghoff A."/>
            <person name="Jones K."/>
            <person name="Drone K."/>
            <person name="Cotton M."/>
            <person name="Joshu C."/>
            <person name="Antonoiu B."/>
            <person name="Zidanic M."/>
            <person name="Strong C."/>
            <person name="Sun H."/>
            <person name="Lamar B."/>
            <person name="Yordan C."/>
            <person name="Ma P."/>
            <person name="Zhong J."/>
            <person name="Preston R."/>
            <person name="Vil D."/>
            <person name="Shekher M."/>
            <person name="Matero A."/>
            <person name="Shah R."/>
            <person name="Swaby I.K."/>
            <person name="O'Shaughnessy A."/>
            <person name="Rodriguez M."/>
            <person name="Hoffman J."/>
            <person name="Till S."/>
            <person name="Granat S."/>
            <person name="Shohdy N."/>
            <person name="Hasegawa A."/>
            <person name="Hameed A."/>
            <person name="Lodhi M."/>
            <person name="Johnson A."/>
            <person name="Chen E."/>
            <person name="Marra M.A."/>
            <person name="Martienssen R."/>
            <person name="McCombie W.R."/>
        </authorList>
    </citation>
    <scope>NUCLEOTIDE SEQUENCE [LARGE SCALE GENOMIC DNA]</scope>
    <source>
        <strain>cv. Columbia</strain>
    </source>
</reference>
<reference key="2">
    <citation type="journal article" date="2017" name="Plant J.">
        <title>Araport11: a complete reannotation of the Arabidopsis thaliana reference genome.</title>
        <authorList>
            <person name="Cheng C.Y."/>
            <person name="Krishnakumar V."/>
            <person name="Chan A.P."/>
            <person name="Thibaud-Nissen F."/>
            <person name="Schobel S."/>
            <person name="Town C.D."/>
        </authorList>
    </citation>
    <scope>GENOME REANNOTATION</scope>
    <source>
        <strain>cv. Columbia</strain>
    </source>
</reference>
<reference key="3">
    <citation type="journal article" date="2003" name="Science">
        <title>Empirical analysis of transcriptional activity in the Arabidopsis genome.</title>
        <authorList>
            <person name="Yamada K."/>
            <person name="Lim J."/>
            <person name="Dale J.M."/>
            <person name="Chen H."/>
            <person name="Shinn P."/>
            <person name="Palm C.J."/>
            <person name="Southwick A.M."/>
            <person name="Wu H.C."/>
            <person name="Kim C.J."/>
            <person name="Nguyen M."/>
            <person name="Pham P.K."/>
            <person name="Cheuk R.F."/>
            <person name="Karlin-Newmann G."/>
            <person name="Liu S.X."/>
            <person name="Lam B."/>
            <person name="Sakano H."/>
            <person name="Wu T."/>
            <person name="Yu G."/>
            <person name="Miranda M."/>
            <person name="Quach H.L."/>
            <person name="Tripp M."/>
            <person name="Chang C.H."/>
            <person name="Lee J.M."/>
            <person name="Toriumi M.J."/>
            <person name="Chan M.M."/>
            <person name="Tang C.C."/>
            <person name="Onodera C.S."/>
            <person name="Deng J.M."/>
            <person name="Akiyama K."/>
            <person name="Ansari Y."/>
            <person name="Arakawa T."/>
            <person name="Banh J."/>
            <person name="Banno F."/>
            <person name="Bowser L."/>
            <person name="Brooks S.Y."/>
            <person name="Carninci P."/>
            <person name="Chao Q."/>
            <person name="Choy N."/>
            <person name="Enju A."/>
            <person name="Goldsmith A.D."/>
            <person name="Gurjal M."/>
            <person name="Hansen N.F."/>
            <person name="Hayashizaki Y."/>
            <person name="Johnson-Hopson C."/>
            <person name="Hsuan V.W."/>
            <person name="Iida K."/>
            <person name="Karnes M."/>
            <person name="Khan S."/>
            <person name="Koesema E."/>
            <person name="Ishida J."/>
            <person name="Jiang P.X."/>
            <person name="Jones T."/>
            <person name="Kawai J."/>
            <person name="Kamiya A."/>
            <person name="Meyers C."/>
            <person name="Nakajima M."/>
            <person name="Narusaka M."/>
            <person name="Seki M."/>
            <person name="Sakurai T."/>
            <person name="Satou M."/>
            <person name="Tamse R."/>
            <person name="Vaysberg M."/>
            <person name="Wallender E.K."/>
            <person name="Wong C."/>
            <person name="Yamamura Y."/>
            <person name="Yuan S."/>
            <person name="Shinozaki K."/>
            <person name="Davis R.W."/>
            <person name="Theologis A."/>
            <person name="Ecker J.R."/>
        </authorList>
    </citation>
    <scope>NUCLEOTIDE SEQUENCE [LARGE SCALE MRNA]</scope>
    <source>
        <strain>cv. Columbia</strain>
    </source>
</reference>
<reference key="4">
    <citation type="submission" date="2002-03" db="EMBL/GenBank/DDBJ databases">
        <title>Full-length cDNA from Arabidopsis thaliana.</title>
        <authorList>
            <person name="Brover V.V."/>
            <person name="Troukhan M.E."/>
            <person name="Alexandrov N.A."/>
            <person name="Lu Y.-P."/>
            <person name="Flavell R.B."/>
            <person name="Feldmann K.A."/>
        </authorList>
    </citation>
    <scope>NUCLEOTIDE SEQUENCE [LARGE SCALE MRNA]</scope>
</reference>
<reference key="5">
    <citation type="journal article" date="2008" name="BMC Genomics">
        <title>Genome-wide analysis of CCCH zinc finger family in Arabidopsis and rice.</title>
        <authorList>
            <person name="Wang D."/>
            <person name="Guo Y."/>
            <person name="Wu C."/>
            <person name="Yang G."/>
            <person name="Li Y."/>
            <person name="Zheng C."/>
        </authorList>
    </citation>
    <scope>NOMENCLATURE</scope>
</reference>
<feature type="chain" id="PRO_0000372003" description="Zinc finger CCCH domain-containing protein 49">
    <location>
        <begin position="1"/>
        <end position="356"/>
    </location>
</feature>
<feature type="zinc finger region" description="C3H1-type 1" evidence="1">
    <location>
        <begin position="120"/>
        <end position="146"/>
    </location>
</feature>
<feature type="zinc finger region" description="C3H1-type 2" evidence="1">
    <location>
        <begin position="155"/>
        <end position="177"/>
    </location>
</feature>
<feature type="region of interest" description="Disordered" evidence="2">
    <location>
        <begin position="209"/>
        <end position="235"/>
    </location>
</feature>
<feature type="compositionally biased region" description="Polar residues" evidence="2">
    <location>
        <begin position="225"/>
        <end position="235"/>
    </location>
</feature>